<name>CR3L2_HUMAN</name>
<dbReference type="EMBL" id="AJ549092">
    <property type="protein sequence ID" value="CAD79342.1"/>
    <property type="molecule type" value="mRNA"/>
</dbReference>
<dbReference type="EMBL" id="AJ549387">
    <property type="protein sequence ID" value="CAD79347.1"/>
    <property type="molecule type" value="mRNA"/>
</dbReference>
<dbReference type="EMBL" id="AK131517">
    <property type="protein sequence ID" value="BAD18659.1"/>
    <property type="molecule type" value="mRNA"/>
</dbReference>
<dbReference type="EMBL" id="CH236950">
    <property type="protein sequence ID" value="EAL24050.1"/>
    <property type="molecule type" value="Genomic_DNA"/>
</dbReference>
<dbReference type="EMBL" id="BC063666">
    <property type="protein sequence ID" value="AAH63666.1"/>
    <property type="molecule type" value="mRNA"/>
</dbReference>
<dbReference type="EMBL" id="BC110813">
    <property type="protein sequence ID" value="AAI10814.1"/>
    <property type="molecule type" value="mRNA"/>
</dbReference>
<dbReference type="CCDS" id="CCDS34760.1">
    <molecule id="Q70SY1-1"/>
</dbReference>
<dbReference type="CCDS" id="CCDS59083.1">
    <molecule id="Q70SY1-3"/>
</dbReference>
<dbReference type="RefSeq" id="NP_001240704.1">
    <molecule id="Q70SY1-3"/>
    <property type="nucleotide sequence ID" value="NM_001253775.2"/>
</dbReference>
<dbReference type="RefSeq" id="NP_919047.2">
    <molecule id="Q70SY1-1"/>
    <property type="nucleotide sequence ID" value="NM_194071.4"/>
</dbReference>
<dbReference type="SMR" id="Q70SY1"/>
<dbReference type="BioGRID" id="122277">
    <property type="interactions" value="36"/>
</dbReference>
<dbReference type="CORUM" id="Q70SY1"/>
<dbReference type="FunCoup" id="Q70SY1">
    <property type="interactions" value="2894"/>
</dbReference>
<dbReference type="IntAct" id="Q70SY1">
    <property type="interactions" value="15"/>
</dbReference>
<dbReference type="STRING" id="9606.ENSP00000329140"/>
<dbReference type="GlyCosmos" id="Q70SY1">
    <property type="glycosylation" value="3 sites, No reported glycans"/>
</dbReference>
<dbReference type="GlyGen" id="Q70SY1">
    <property type="glycosylation" value="4 sites, 2 N-linked glycans (2 sites)"/>
</dbReference>
<dbReference type="iPTMnet" id="Q70SY1"/>
<dbReference type="PhosphoSitePlus" id="Q70SY1"/>
<dbReference type="BioMuta" id="CREB3L2"/>
<dbReference type="DMDM" id="296439387"/>
<dbReference type="jPOST" id="Q70SY1"/>
<dbReference type="MassIVE" id="Q70SY1"/>
<dbReference type="PaxDb" id="9606-ENSP00000329140"/>
<dbReference type="PeptideAtlas" id="Q70SY1"/>
<dbReference type="ProteomicsDB" id="68563">
    <molecule id="Q70SY1-1"/>
</dbReference>
<dbReference type="ProteomicsDB" id="68564">
    <molecule id="Q70SY1-2"/>
</dbReference>
<dbReference type="ProteomicsDB" id="68565">
    <molecule id="Q70SY1-3"/>
</dbReference>
<dbReference type="Antibodypedia" id="18186">
    <property type="antibodies" value="246 antibodies from 31 providers"/>
</dbReference>
<dbReference type="DNASU" id="64764"/>
<dbReference type="Ensembl" id="ENST00000330387.11">
    <molecule id="Q70SY1-1"/>
    <property type="protein sequence ID" value="ENSP00000329140.6"/>
    <property type="gene ID" value="ENSG00000182158.16"/>
</dbReference>
<dbReference type="Ensembl" id="ENST00000452463.5">
    <molecule id="Q70SY1-3"/>
    <property type="protein sequence ID" value="ENSP00000410314.1"/>
    <property type="gene ID" value="ENSG00000182158.16"/>
</dbReference>
<dbReference type="Ensembl" id="ENST00000456390.5">
    <molecule id="Q70SY1-2"/>
    <property type="protein sequence ID" value="ENSP00000403550.1"/>
    <property type="gene ID" value="ENSG00000182158.16"/>
</dbReference>
<dbReference type="GeneID" id="64764"/>
<dbReference type="KEGG" id="hsa:64764"/>
<dbReference type="MANE-Select" id="ENST00000330387.11">
    <property type="protein sequence ID" value="ENSP00000329140.6"/>
    <property type="RefSeq nucleotide sequence ID" value="NM_194071.4"/>
    <property type="RefSeq protein sequence ID" value="NP_919047.2"/>
</dbReference>
<dbReference type="UCSC" id="uc003vtw.4">
    <molecule id="Q70SY1-1"/>
    <property type="organism name" value="human"/>
</dbReference>
<dbReference type="AGR" id="HGNC:23720"/>
<dbReference type="CTD" id="64764"/>
<dbReference type="DisGeNET" id="64764"/>
<dbReference type="GeneCards" id="CREB3L2"/>
<dbReference type="HGNC" id="HGNC:23720">
    <property type="gene designation" value="CREB3L2"/>
</dbReference>
<dbReference type="HPA" id="ENSG00000182158">
    <property type="expression patterns" value="Low tissue specificity"/>
</dbReference>
<dbReference type="MalaCards" id="CREB3L2"/>
<dbReference type="MIM" id="608834">
    <property type="type" value="gene"/>
</dbReference>
<dbReference type="neXtProt" id="NX_Q70SY1"/>
<dbReference type="OpenTargets" id="ENSG00000182158"/>
<dbReference type="Orphanet" id="79105">
    <property type="disease" value="Myxofibrosarcoma"/>
</dbReference>
<dbReference type="PharmGKB" id="PA134914841"/>
<dbReference type="VEuPathDB" id="HostDB:ENSG00000182158"/>
<dbReference type="eggNOG" id="KOG0709">
    <property type="taxonomic scope" value="Eukaryota"/>
</dbReference>
<dbReference type="GeneTree" id="ENSGT00940000157659"/>
<dbReference type="HOGENOM" id="CLU_037638_0_0_1"/>
<dbReference type="InParanoid" id="Q70SY1"/>
<dbReference type="OMA" id="CSNENME"/>
<dbReference type="OrthoDB" id="674948at2759"/>
<dbReference type="PAN-GO" id="Q70SY1">
    <property type="GO annotations" value="3 GO annotations based on evolutionary models"/>
</dbReference>
<dbReference type="PhylomeDB" id="Q70SY1"/>
<dbReference type="TreeFam" id="TF316079"/>
<dbReference type="PathwayCommons" id="Q70SY1"/>
<dbReference type="Reactome" id="R-HSA-8874211">
    <property type="pathway name" value="CREB3 factors activate genes"/>
</dbReference>
<dbReference type="SignaLink" id="Q70SY1"/>
<dbReference type="SIGNOR" id="Q70SY1"/>
<dbReference type="BioGRID-ORCS" id="64764">
    <property type="hits" value="13 hits in 1177 CRISPR screens"/>
</dbReference>
<dbReference type="ChiTaRS" id="CREB3L2">
    <property type="organism name" value="human"/>
</dbReference>
<dbReference type="GenomeRNAi" id="64764"/>
<dbReference type="Pharos" id="Q70SY1">
    <property type="development level" value="Tbio"/>
</dbReference>
<dbReference type="PRO" id="PR:Q70SY1"/>
<dbReference type="Proteomes" id="UP000005640">
    <property type="component" value="Chromosome 7"/>
</dbReference>
<dbReference type="RNAct" id="Q70SY1">
    <property type="molecule type" value="protein"/>
</dbReference>
<dbReference type="Bgee" id="ENSG00000182158">
    <property type="expression patterns" value="Expressed in saphenous vein and 200 other cell types or tissues"/>
</dbReference>
<dbReference type="ExpressionAtlas" id="Q70SY1">
    <property type="expression patterns" value="baseline and differential"/>
</dbReference>
<dbReference type="GO" id="GO:0000785">
    <property type="term" value="C:chromatin"/>
    <property type="evidence" value="ECO:0000247"/>
    <property type="project" value="NTNU_SB"/>
</dbReference>
<dbReference type="GO" id="GO:0005783">
    <property type="term" value="C:endoplasmic reticulum"/>
    <property type="evidence" value="ECO:0000314"/>
    <property type="project" value="HPA"/>
</dbReference>
<dbReference type="GO" id="GO:0005789">
    <property type="term" value="C:endoplasmic reticulum membrane"/>
    <property type="evidence" value="ECO:0007669"/>
    <property type="project" value="UniProtKB-SubCell"/>
</dbReference>
<dbReference type="GO" id="GO:0005654">
    <property type="term" value="C:nucleoplasm"/>
    <property type="evidence" value="ECO:0000314"/>
    <property type="project" value="HPA"/>
</dbReference>
<dbReference type="GO" id="GO:0005634">
    <property type="term" value="C:nucleus"/>
    <property type="evidence" value="ECO:0000314"/>
    <property type="project" value="UniProtKB"/>
</dbReference>
<dbReference type="GO" id="GO:0035497">
    <property type="term" value="F:cAMP response element binding"/>
    <property type="evidence" value="ECO:0000315"/>
    <property type="project" value="UniProtKB"/>
</dbReference>
<dbReference type="GO" id="GO:0001228">
    <property type="term" value="F:DNA-binding transcription activator activity, RNA polymerase II-specific"/>
    <property type="evidence" value="ECO:0007669"/>
    <property type="project" value="Ensembl"/>
</dbReference>
<dbReference type="GO" id="GO:0000981">
    <property type="term" value="F:DNA-binding transcription factor activity, RNA polymerase II-specific"/>
    <property type="evidence" value="ECO:0000247"/>
    <property type="project" value="NTNU_SB"/>
</dbReference>
<dbReference type="GO" id="GO:0000976">
    <property type="term" value="F:transcription cis-regulatory region binding"/>
    <property type="evidence" value="ECO:0000315"/>
    <property type="project" value="UniProtKB"/>
</dbReference>
<dbReference type="GO" id="GO:0051216">
    <property type="term" value="P:cartilage development"/>
    <property type="evidence" value="ECO:0000250"/>
    <property type="project" value="UniProtKB"/>
</dbReference>
<dbReference type="GO" id="GO:0002062">
    <property type="term" value="P:chondrocyte differentiation"/>
    <property type="evidence" value="ECO:0000250"/>
    <property type="project" value="UniProtKB"/>
</dbReference>
<dbReference type="GO" id="GO:0006888">
    <property type="term" value="P:endoplasmic reticulum to Golgi vesicle-mediated transport"/>
    <property type="evidence" value="ECO:0007669"/>
    <property type="project" value="Ensembl"/>
</dbReference>
<dbReference type="GO" id="GO:0045893">
    <property type="term" value="P:positive regulation of DNA-templated transcription"/>
    <property type="evidence" value="ECO:0000314"/>
    <property type="project" value="UniProtKB"/>
</dbReference>
<dbReference type="GO" id="GO:0006357">
    <property type="term" value="P:regulation of transcription by RNA polymerase II"/>
    <property type="evidence" value="ECO:0000318"/>
    <property type="project" value="GO_Central"/>
</dbReference>
<dbReference type="GO" id="GO:0034976">
    <property type="term" value="P:response to endoplasmic reticulum stress"/>
    <property type="evidence" value="ECO:0000270"/>
    <property type="project" value="UniProtKB"/>
</dbReference>
<dbReference type="GO" id="GO:0006986">
    <property type="term" value="P:response to unfolded protein"/>
    <property type="evidence" value="ECO:0007669"/>
    <property type="project" value="UniProtKB-KW"/>
</dbReference>
<dbReference type="CDD" id="cd14689">
    <property type="entry name" value="bZIP_CREB3"/>
    <property type="match status" value="1"/>
</dbReference>
<dbReference type="FunFam" id="1.20.5.170:FF:000054">
    <property type="entry name" value="Cyclic AMP-responsive element-binding protein 3-like 2"/>
    <property type="match status" value="1"/>
</dbReference>
<dbReference type="Gene3D" id="1.20.5.170">
    <property type="match status" value="1"/>
</dbReference>
<dbReference type="InterPro" id="IPR004827">
    <property type="entry name" value="bZIP"/>
</dbReference>
<dbReference type="InterPro" id="IPR046347">
    <property type="entry name" value="bZIP_sf"/>
</dbReference>
<dbReference type="PANTHER" id="PTHR46004">
    <property type="entry name" value="CYCLIC AMP RESPONSE ELEMENT-BINDING PROTEIN A"/>
    <property type="match status" value="1"/>
</dbReference>
<dbReference type="PANTHER" id="PTHR46004:SF2">
    <property type="entry name" value="CYCLIC AMP-RESPONSIVE ELEMENT-BINDING PROTEIN 3-LIKE PROTEIN 2"/>
    <property type="match status" value="1"/>
</dbReference>
<dbReference type="Pfam" id="PF00170">
    <property type="entry name" value="bZIP_1"/>
    <property type="match status" value="1"/>
</dbReference>
<dbReference type="SMART" id="SM00338">
    <property type="entry name" value="BRLZ"/>
    <property type="match status" value="1"/>
</dbReference>
<dbReference type="SUPFAM" id="SSF57959">
    <property type="entry name" value="Leucine zipper domain"/>
    <property type="match status" value="1"/>
</dbReference>
<dbReference type="PROSITE" id="PS50217">
    <property type="entry name" value="BZIP"/>
    <property type="match status" value="1"/>
</dbReference>
<dbReference type="PROSITE" id="PS00036">
    <property type="entry name" value="BZIP_BASIC"/>
    <property type="match status" value="1"/>
</dbReference>
<proteinExistence type="evidence at protein level"/>
<comment type="function">
    <text evidence="2 9">Transcription factor involved in unfolded protein response (UPR). In the absence of endoplasmic reticulum (ER) stress, inserted into ER membranes, with N-terminal DNA-binding and transcription activation domains oriented toward the cytosolic face of the membrane. In response to ER stress, transported to the Golgi, where it is cleaved in a site-specific manner by resident proteases S1P/MBTPS1 and S2P/MBTPS2. The released N-terminal cytosolic domain is translocated to the nucleus to effect transcription of specific target genes. Plays a critical role in chondrogenesis by activating the transcription of SEC23A, which promotes the transport and secretion of cartilage matrix proteins, and possibly that of ER biogenesis-related genes (By similarity). In a neuroblastoma cell line, protects cells from ER stress-induced death (PubMed:17178827). In vitro activates transcription of target genes via direct binding to the CRE site (PubMed:17178827).</text>
</comment>
<comment type="subunit">
    <text evidence="1">Binds DNA as a dimer.</text>
</comment>
<comment type="subcellular location">
    <subcellularLocation>
        <location evidence="2">Endoplasmic reticulum membrane</location>
        <topology>Single-pass type II membrane protein</topology>
    </subcellularLocation>
    <text evidence="2">ER membrane resident protein. Upon ER stress, translocated to the Golgi apparatus where it is cleaved. The cytosolic N-terminal fragment (processed cyclic AMP-responsive element-binding protein 3-like protein 1) is transported into the nucleus.</text>
</comment>
<comment type="subcellular location">
    <molecule>Processed cyclic AMP-responsive element-binding protein 3-like protein 2</molecule>
    <subcellularLocation>
        <location>Nucleus</location>
    </subcellularLocation>
    <text evidence="2">Upon ER stress, translocated into the nucleus.</text>
</comment>
<comment type="alternative products">
    <event type="alternative splicing"/>
    <isoform>
        <id>Q70SY1-1</id>
        <name>1</name>
        <sequence type="displayed"/>
    </isoform>
    <isoform>
        <id>Q70SY1-2</id>
        <name>2</name>
        <sequence type="described" ref="VSP_025636"/>
    </isoform>
    <isoform>
        <id>Q70SY1-3</id>
        <name>3</name>
        <sequence type="described" ref="VSP_025634 VSP_025635"/>
    </isoform>
</comment>
<comment type="tissue specificity">
    <text evidence="7">Widely expressed with highest levels in placenta, lung, spleen and intestine, and lowest levels in heart, brain, skeletal muscle, thymus, colon and leukocytes. In fetal tissues, the weakest expression is detected in brain and heart.</text>
</comment>
<comment type="induction">
    <text evidence="9">Up-regulated by ER stress at the transcript and protein levels, the increase at the protein level is much higher than at the transcript level. This induction is accompanied by increased proteolytic cleavage that releases the N-terminal transcription factor domain.</text>
</comment>
<comment type="PTM">
    <text evidence="2">Upon ER stress, translocated to the Golgi apparatus, where it is processed by regulated intramembrane proteolysis (RIP) to release the cytosol-facing N-terminal transcription factor domain. The cleavage is performed sequentially by site-1 and site-2 proteases (S1P/MBTPS1 and S2P/MBTPS2).</text>
</comment>
<comment type="PTM">
    <text evidence="9">N-glycosylated.</text>
</comment>
<comment type="PTM">
    <text evidence="10">Ubiquitinated by HRD1/SYVN1; undergoes 'Lys-48'-linked ubiquitination, followed by rapid proteasomal degradation under normal conditions. Upon ER stress, SYVN1 E3 ubiquitin-protein ligase dissociates from its substrate, ubiquitination does not occur and CREB3L2 is stabilized.</text>
</comment>
<comment type="disease">
    <text>A chromosomal aberration involving CREB3L2 is found in low grade fibromyxoid sarcoma (LGFMS). Translocation t(7;16)(q33;p11) with FUS.</text>
</comment>
<comment type="similarity">
    <text evidence="14">Belongs to the bZIP family. ATF subfamily.</text>
</comment>
<comment type="online information" name="Atlas of Genetics and Cytogenetics in Oncology and Haematology">
    <link uri="https://atlasgeneticsoncology.org/gene/153/creb3l2-(camp-responsive-element-binding-protein-3-like-2)"/>
</comment>
<evidence type="ECO:0000250" key="1"/>
<evidence type="ECO:0000250" key="2">
    <source>
        <dbReference type="UniProtKB" id="Q8BH52"/>
    </source>
</evidence>
<evidence type="ECO:0000255" key="3"/>
<evidence type="ECO:0000255" key="4">
    <source>
        <dbReference type="PROSITE-ProRule" id="PRU00978"/>
    </source>
</evidence>
<evidence type="ECO:0000256" key="5">
    <source>
        <dbReference type="SAM" id="MobiDB-lite"/>
    </source>
</evidence>
<evidence type="ECO:0000269" key="6">
    <source>
    </source>
</evidence>
<evidence type="ECO:0000269" key="7">
    <source>
    </source>
</evidence>
<evidence type="ECO:0000269" key="8">
    <source>
    </source>
</evidence>
<evidence type="ECO:0000269" key="9">
    <source>
    </source>
</evidence>
<evidence type="ECO:0000269" key="10">
    <source>
    </source>
</evidence>
<evidence type="ECO:0000303" key="11">
    <source>
    </source>
</evidence>
<evidence type="ECO:0000303" key="12">
    <source>
    </source>
</evidence>
<evidence type="ECO:0000303" key="13">
    <source>
    </source>
</evidence>
<evidence type="ECO:0000305" key="14"/>
<evidence type="ECO:0007744" key="15">
    <source>
    </source>
</evidence>
<evidence type="ECO:0007744" key="16">
    <source>
    </source>
</evidence>
<evidence type="ECO:0007744" key="17">
    <source>
    </source>
</evidence>
<evidence type="ECO:0007744" key="18">
    <source>
    </source>
</evidence>
<evidence type="ECO:0007744" key="19">
    <source>
    </source>
</evidence>
<evidence type="ECO:0007744" key="20">
    <source>
    </source>
</evidence>
<organism>
    <name type="scientific">Homo sapiens</name>
    <name type="common">Human</name>
    <dbReference type="NCBI Taxonomy" id="9606"/>
    <lineage>
        <taxon>Eukaryota</taxon>
        <taxon>Metazoa</taxon>
        <taxon>Chordata</taxon>
        <taxon>Craniata</taxon>
        <taxon>Vertebrata</taxon>
        <taxon>Euteleostomi</taxon>
        <taxon>Mammalia</taxon>
        <taxon>Eutheria</taxon>
        <taxon>Euarchontoglires</taxon>
        <taxon>Primates</taxon>
        <taxon>Haplorrhini</taxon>
        <taxon>Catarrhini</taxon>
        <taxon>Hominidae</taxon>
        <taxon>Homo</taxon>
    </lineage>
</organism>
<keyword id="KW-0010">Activator</keyword>
<keyword id="KW-0025">Alternative splicing</keyword>
<keyword id="KW-0160">Chromosomal rearrangement</keyword>
<keyword id="KW-0217">Developmental protein</keyword>
<keyword id="KW-0238">DNA-binding</keyword>
<keyword id="KW-0256">Endoplasmic reticulum</keyword>
<keyword id="KW-0325">Glycoprotein</keyword>
<keyword id="KW-1017">Isopeptide bond</keyword>
<keyword id="KW-0472">Membrane</keyword>
<keyword id="KW-0539">Nucleus</keyword>
<keyword id="KW-0597">Phosphoprotein</keyword>
<keyword id="KW-1267">Proteomics identification</keyword>
<keyword id="KW-0656">Proto-oncogene</keyword>
<keyword id="KW-1185">Reference proteome</keyword>
<keyword id="KW-0735">Signal-anchor</keyword>
<keyword id="KW-0804">Transcription</keyword>
<keyword id="KW-0805">Transcription regulation</keyword>
<keyword id="KW-0812">Transmembrane</keyword>
<keyword id="KW-1133">Transmembrane helix</keyword>
<keyword id="KW-0832">Ubl conjugation</keyword>
<keyword id="KW-0834">Unfolded protein response</keyword>
<accession>Q70SY1</accession>
<accession>Q6P454</accession>
<accession>Q6ZMR6</accession>
<gene>
    <name type="primary">CREB3L2</name>
    <name type="synonym">BBF2H7</name>
</gene>
<reference key="1">
    <citation type="journal article" date="2003" name="Hum. Mol. Genet.">
        <title>Fusion of the FUS and BBF2H7 genes in low grade fibromyxoid sarcoma.</title>
        <authorList>
            <person name="Storlazzi C.T."/>
            <person name="Mertens F."/>
            <person name="Nascimento A."/>
            <person name="Isaksson M."/>
            <person name="Wejde J."/>
            <person name="Brosjoe O."/>
            <person name="Mandahl N."/>
            <person name="Panagopoulos I."/>
        </authorList>
    </citation>
    <scope>NUCLEOTIDE SEQUENCE [MRNA] (ISOFORM 1)</scope>
    <scope>VARIANTS THR-100 DEL AND ILE-130</scope>
    <scope>TISSUE SPECIFICITY</scope>
    <scope>CHROMOSOMAL TRANSLOCATION WITH FUS</scope>
    <source>
        <tissue>Lung</tissue>
        <tissue>Placenta</tissue>
    </source>
</reference>
<reference key="2">
    <citation type="journal article" date="2004" name="Nat. Genet.">
        <title>Complete sequencing and characterization of 21,243 full-length human cDNAs.</title>
        <authorList>
            <person name="Ota T."/>
            <person name="Suzuki Y."/>
            <person name="Nishikawa T."/>
            <person name="Otsuki T."/>
            <person name="Sugiyama T."/>
            <person name="Irie R."/>
            <person name="Wakamatsu A."/>
            <person name="Hayashi K."/>
            <person name="Sato H."/>
            <person name="Nagai K."/>
            <person name="Kimura K."/>
            <person name="Makita H."/>
            <person name="Sekine M."/>
            <person name="Obayashi M."/>
            <person name="Nishi T."/>
            <person name="Shibahara T."/>
            <person name="Tanaka T."/>
            <person name="Ishii S."/>
            <person name="Yamamoto J."/>
            <person name="Saito K."/>
            <person name="Kawai Y."/>
            <person name="Isono Y."/>
            <person name="Nakamura Y."/>
            <person name="Nagahari K."/>
            <person name="Murakami K."/>
            <person name="Yasuda T."/>
            <person name="Iwayanagi T."/>
            <person name="Wagatsuma M."/>
            <person name="Shiratori A."/>
            <person name="Sudo H."/>
            <person name="Hosoiri T."/>
            <person name="Kaku Y."/>
            <person name="Kodaira H."/>
            <person name="Kondo H."/>
            <person name="Sugawara M."/>
            <person name="Takahashi M."/>
            <person name="Kanda K."/>
            <person name="Yokoi T."/>
            <person name="Furuya T."/>
            <person name="Kikkawa E."/>
            <person name="Omura Y."/>
            <person name="Abe K."/>
            <person name="Kamihara K."/>
            <person name="Katsuta N."/>
            <person name="Sato K."/>
            <person name="Tanikawa M."/>
            <person name="Yamazaki M."/>
            <person name="Ninomiya K."/>
            <person name="Ishibashi T."/>
            <person name="Yamashita H."/>
            <person name="Murakawa K."/>
            <person name="Fujimori K."/>
            <person name="Tanai H."/>
            <person name="Kimata M."/>
            <person name="Watanabe M."/>
            <person name="Hiraoka S."/>
            <person name="Chiba Y."/>
            <person name="Ishida S."/>
            <person name="Ono Y."/>
            <person name="Takiguchi S."/>
            <person name="Watanabe S."/>
            <person name="Yosida M."/>
            <person name="Hotuta T."/>
            <person name="Kusano J."/>
            <person name="Kanehori K."/>
            <person name="Takahashi-Fujii A."/>
            <person name="Hara H."/>
            <person name="Tanase T.-O."/>
            <person name="Nomura Y."/>
            <person name="Togiya S."/>
            <person name="Komai F."/>
            <person name="Hara R."/>
            <person name="Takeuchi K."/>
            <person name="Arita M."/>
            <person name="Imose N."/>
            <person name="Musashino K."/>
            <person name="Yuuki H."/>
            <person name="Oshima A."/>
            <person name="Sasaki N."/>
            <person name="Aotsuka S."/>
            <person name="Yoshikawa Y."/>
            <person name="Matsunawa H."/>
            <person name="Ichihara T."/>
            <person name="Shiohata N."/>
            <person name="Sano S."/>
            <person name="Moriya S."/>
            <person name="Momiyama H."/>
            <person name="Satoh N."/>
            <person name="Takami S."/>
            <person name="Terashima Y."/>
            <person name="Suzuki O."/>
            <person name="Nakagawa S."/>
            <person name="Senoh A."/>
            <person name="Mizoguchi H."/>
            <person name="Goto Y."/>
            <person name="Shimizu F."/>
            <person name="Wakebe H."/>
            <person name="Hishigaki H."/>
            <person name="Watanabe T."/>
            <person name="Sugiyama A."/>
            <person name="Takemoto M."/>
            <person name="Kawakami B."/>
            <person name="Yamazaki M."/>
            <person name="Watanabe K."/>
            <person name="Kumagai A."/>
            <person name="Itakura S."/>
            <person name="Fukuzumi Y."/>
            <person name="Fujimori Y."/>
            <person name="Komiyama M."/>
            <person name="Tashiro H."/>
            <person name="Tanigami A."/>
            <person name="Fujiwara T."/>
            <person name="Ono T."/>
            <person name="Yamada K."/>
            <person name="Fujii Y."/>
            <person name="Ozaki K."/>
            <person name="Hirao M."/>
            <person name="Ohmori Y."/>
            <person name="Kawabata A."/>
            <person name="Hikiji T."/>
            <person name="Kobatake N."/>
            <person name="Inagaki H."/>
            <person name="Ikema Y."/>
            <person name="Okamoto S."/>
            <person name="Okitani R."/>
            <person name="Kawakami T."/>
            <person name="Noguchi S."/>
            <person name="Itoh T."/>
            <person name="Shigeta K."/>
            <person name="Senba T."/>
            <person name="Matsumura K."/>
            <person name="Nakajima Y."/>
            <person name="Mizuno T."/>
            <person name="Morinaga M."/>
            <person name="Sasaki M."/>
            <person name="Togashi T."/>
            <person name="Oyama M."/>
            <person name="Hata H."/>
            <person name="Watanabe M."/>
            <person name="Komatsu T."/>
            <person name="Mizushima-Sugano J."/>
            <person name="Satoh T."/>
            <person name="Shirai Y."/>
            <person name="Takahashi Y."/>
            <person name="Nakagawa K."/>
            <person name="Okumura K."/>
            <person name="Nagase T."/>
            <person name="Nomura N."/>
            <person name="Kikuchi H."/>
            <person name="Masuho Y."/>
            <person name="Yamashita R."/>
            <person name="Nakai K."/>
            <person name="Yada T."/>
            <person name="Nakamura Y."/>
            <person name="Ohara O."/>
            <person name="Isogai T."/>
            <person name="Sugano S."/>
        </authorList>
    </citation>
    <scope>NUCLEOTIDE SEQUENCE [LARGE SCALE MRNA] (ISOFORM 2)</scope>
    <source>
        <tissue>Tongue</tissue>
    </source>
</reference>
<reference key="3">
    <citation type="journal article" date="2003" name="Science">
        <title>Human chromosome 7: DNA sequence and biology.</title>
        <authorList>
            <person name="Scherer S.W."/>
            <person name="Cheung J."/>
            <person name="MacDonald J.R."/>
            <person name="Osborne L.R."/>
            <person name="Nakabayashi K."/>
            <person name="Herbrick J.-A."/>
            <person name="Carson A.R."/>
            <person name="Parker-Katiraee L."/>
            <person name="Skaug J."/>
            <person name="Khaja R."/>
            <person name="Zhang J."/>
            <person name="Hudek A.K."/>
            <person name="Li M."/>
            <person name="Haddad M."/>
            <person name="Duggan G.E."/>
            <person name="Fernandez B.A."/>
            <person name="Kanematsu E."/>
            <person name="Gentles S."/>
            <person name="Christopoulos C.C."/>
            <person name="Choufani S."/>
            <person name="Kwasnicka D."/>
            <person name="Zheng X.H."/>
            <person name="Lai Z."/>
            <person name="Nusskern D.R."/>
            <person name="Zhang Q."/>
            <person name="Gu Z."/>
            <person name="Lu F."/>
            <person name="Zeesman S."/>
            <person name="Nowaczyk M.J."/>
            <person name="Teshima I."/>
            <person name="Chitayat D."/>
            <person name="Shuman C."/>
            <person name="Weksberg R."/>
            <person name="Zackai E.H."/>
            <person name="Grebe T.A."/>
            <person name="Cox S.R."/>
            <person name="Kirkpatrick S.J."/>
            <person name="Rahman N."/>
            <person name="Friedman J.M."/>
            <person name="Heng H.H.Q."/>
            <person name="Pelicci P.G."/>
            <person name="Lo-Coco F."/>
            <person name="Belloni E."/>
            <person name="Shaffer L.G."/>
            <person name="Pober B."/>
            <person name="Morton C.C."/>
            <person name="Gusella J.F."/>
            <person name="Bruns G.A.P."/>
            <person name="Korf B.R."/>
            <person name="Quade B.J."/>
            <person name="Ligon A.H."/>
            <person name="Ferguson H."/>
            <person name="Higgins A.W."/>
            <person name="Leach N.T."/>
            <person name="Herrick S.R."/>
            <person name="Lemyre E."/>
            <person name="Farra C.G."/>
            <person name="Kim H.-G."/>
            <person name="Summers A.M."/>
            <person name="Gripp K.W."/>
            <person name="Roberts W."/>
            <person name="Szatmari P."/>
            <person name="Winsor E.J.T."/>
            <person name="Grzeschik K.-H."/>
            <person name="Teebi A."/>
            <person name="Minassian B.A."/>
            <person name="Kere J."/>
            <person name="Armengol L."/>
            <person name="Pujana M.A."/>
            <person name="Estivill X."/>
            <person name="Wilson M.D."/>
            <person name="Koop B.F."/>
            <person name="Tosi S."/>
            <person name="Moore G.E."/>
            <person name="Boright A.P."/>
            <person name="Zlotorynski E."/>
            <person name="Kerem B."/>
            <person name="Kroisel P.M."/>
            <person name="Petek E."/>
            <person name="Oscier D.G."/>
            <person name="Mould S.J."/>
            <person name="Doehner H."/>
            <person name="Doehner K."/>
            <person name="Rommens J.M."/>
            <person name="Vincent J.B."/>
            <person name="Venter J.C."/>
            <person name="Li P.W."/>
            <person name="Mural R.J."/>
            <person name="Adams M.D."/>
            <person name="Tsui L.-C."/>
        </authorList>
    </citation>
    <scope>NUCLEOTIDE SEQUENCE [LARGE SCALE GENOMIC DNA]</scope>
    <scope>VARIANTS THR-100 DEL AND ILE-130</scope>
</reference>
<reference key="4">
    <citation type="journal article" date="2004" name="Genome Res.">
        <title>The status, quality, and expansion of the NIH full-length cDNA project: the Mammalian Gene Collection (MGC).</title>
        <authorList>
            <consortium name="The MGC Project Team"/>
        </authorList>
    </citation>
    <scope>NUCLEOTIDE SEQUENCE [LARGE SCALE MRNA] (ISOFORMS 1 AND 3)</scope>
    <scope>VARIANTS THR-100 DEL AND ILE-130</scope>
    <source>
        <tissue>Brain</tissue>
        <tissue>Skin</tissue>
    </source>
</reference>
<reference key="5">
    <citation type="journal article" date="2004" name="Genes Chromosomes Cancer">
        <title>The chimeric FUS/CREB3l2 gene is specific for low-grade fibromyxoid sarcoma.</title>
        <authorList>
            <person name="Panagopoulos I."/>
            <person name="Storlazzi C.T."/>
            <person name="Fletcher C.D."/>
            <person name="Fletcher J.A."/>
            <person name="Nascimento A."/>
            <person name="Domanski H.A."/>
            <person name="Wejde J."/>
            <person name="Brosjo O."/>
            <person name="Rydholm A."/>
            <person name="Isaksson M."/>
            <person name="Mandahl N."/>
            <person name="Mertens F."/>
        </authorList>
    </citation>
    <scope>CHROMOSOMAL TRANSLOCATION WITH FUS</scope>
</reference>
<reference key="6">
    <citation type="journal article" date="2006" name="Cell">
        <title>Global, in vivo, and site-specific phosphorylation dynamics in signaling networks.</title>
        <authorList>
            <person name="Olsen J.V."/>
            <person name="Blagoev B."/>
            <person name="Gnad F."/>
            <person name="Macek B."/>
            <person name="Kumar C."/>
            <person name="Mortensen P."/>
            <person name="Mann M."/>
        </authorList>
    </citation>
    <scope>PHOSPHORYLATION [LARGE SCALE ANALYSIS] AT SER-191</scope>
    <scope>IDENTIFICATION BY MASS SPECTROMETRY [LARGE SCALE ANALYSIS]</scope>
    <source>
        <tissue>Cervix carcinoma</tissue>
    </source>
</reference>
<reference key="7">
    <citation type="journal article" date="2007" name="Mol. Cell. Biol.">
        <title>BBF2H7, a novel transmembrane bZIP transcription factor, is a new type of endoplasmic reticulum stress transducer.</title>
        <authorList>
            <person name="Kondo S."/>
            <person name="Saito A."/>
            <person name="Hino S."/>
            <person name="Murakami T."/>
            <person name="Ogata M."/>
            <person name="Kanemoto S."/>
            <person name="Nara S."/>
            <person name="Yamashita A."/>
            <person name="Yoshinaga K."/>
            <person name="Hara H."/>
            <person name="Imaizumi K."/>
        </authorList>
    </citation>
    <scope>FUNCTION</scope>
    <scope>GLYCOSYLATION</scope>
    <scope>INDUCTION BY ER STRESS</scope>
</reference>
<reference key="8">
    <citation type="journal article" date="2008" name="Proc. Natl. Acad. Sci. U.S.A.">
        <title>A quantitative atlas of mitotic phosphorylation.</title>
        <authorList>
            <person name="Dephoure N."/>
            <person name="Zhou C."/>
            <person name="Villen J."/>
            <person name="Beausoleil S.A."/>
            <person name="Bakalarski C.E."/>
            <person name="Elledge S.J."/>
            <person name="Gygi S.P."/>
        </authorList>
    </citation>
    <scope>IDENTIFICATION BY MASS SPECTROMETRY [LARGE SCALE ANALYSIS]</scope>
    <source>
        <tissue>Cervix carcinoma</tissue>
    </source>
</reference>
<reference key="9">
    <citation type="journal article" date="2012" name="Cell Death Differ.">
        <title>Activation of OASIS family, ER stress transducers, is dependent on its stabilization.</title>
        <authorList>
            <person name="Kondo S."/>
            <person name="Hino S.I."/>
            <person name="Saito A."/>
            <person name="Kanemoto S."/>
            <person name="Kawasaki N."/>
            <person name="Asada R."/>
            <person name="Izumi S."/>
            <person name="Iwamoto H."/>
            <person name="Oki M."/>
            <person name="Miyagi H."/>
            <person name="Kaneko M."/>
            <person name="Nomura Y."/>
            <person name="Urano F."/>
            <person name="Imaizumi K."/>
        </authorList>
    </citation>
    <scope>UBIQUITINATION</scope>
</reference>
<reference key="10">
    <citation type="journal article" date="2013" name="J. Proteome Res.">
        <title>Toward a comprehensive characterization of a human cancer cell phosphoproteome.</title>
        <authorList>
            <person name="Zhou H."/>
            <person name="Di Palma S."/>
            <person name="Preisinger C."/>
            <person name="Peng M."/>
            <person name="Polat A.N."/>
            <person name="Heck A.J."/>
            <person name="Mohammed S."/>
        </authorList>
    </citation>
    <scope>PHOSPHORYLATION [LARGE SCALE ANALYSIS] AT SER-93 AND SER-191</scope>
    <scope>IDENTIFICATION BY MASS SPECTROMETRY [LARGE SCALE ANALYSIS]</scope>
    <source>
        <tissue>Cervix carcinoma</tissue>
        <tissue>Erythroleukemia</tissue>
    </source>
</reference>
<reference key="11">
    <citation type="journal article" date="2014" name="Nat. Struct. Mol. Biol.">
        <title>Uncovering global SUMOylation signaling networks in a site-specific manner.</title>
        <authorList>
            <person name="Hendriks I.A."/>
            <person name="D'Souza R.C."/>
            <person name="Yang B."/>
            <person name="Verlaan-de Vries M."/>
            <person name="Mann M."/>
            <person name="Vertegaal A.C."/>
        </authorList>
    </citation>
    <scope>SUMOYLATION [LARGE SCALE ANALYSIS] AT LYS-178</scope>
    <scope>IDENTIFICATION BY MASS SPECTROMETRY [LARGE SCALE ANALYSIS]</scope>
</reference>
<reference key="12">
    <citation type="journal article" date="2015" name="Cell Rep.">
        <title>SUMO-2 orchestrates chromatin modifiers in response to DNA damage.</title>
        <authorList>
            <person name="Hendriks I.A."/>
            <person name="Treffers L.W."/>
            <person name="Verlaan-de Vries M."/>
            <person name="Olsen J.V."/>
            <person name="Vertegaal A.C."/>
        </authorList>
    </citation>
    <scope>SUMOYLATION [LARGE SCALE ANALYSIS] AT LYS-178</scope>
    <scope>IDENTIFICATION BY MASS SPECTROMETRY [LARGE SCALE ANALYSIS]</scope>
</reference>
<reference key="13">
    <citation type="journal article" date="2015" name="Mol. Cell. Proteomics">
        <title>System-wide analysis of SUMOylation dynamics in response to replication stress reveals novel small ubiquitin-like modified target proteins and acceptor lysines relevant for genome stability.</title>
        <authorList>
            <person name="Xiao Z."/>
            <person name="Chang J.G."/>
            <person name="Hendriks I.A."/>
            <person name="Sigurdsson J.O."/>
            <person name="Olsen J.V."/>
            <person name="Vertegaal A.C."/>
        </authorList>
    </citation>
    <scope>SUMOYLATION [LARGE SCALE ANALYSIS] AT LYS-178</scope>
    <scope>IDENTIFICATION BY MASS SPECTROMETRY [LARGE SCALE ANALYSIS]</scope>
</reference>
<reference key="14">
    <citation type="journal article" date="2017" name="Nat. Struct. Mol. Biol.">
        <title>Site-specific mapping of the human SUMO proteome reveals co-modification with phosphorylation.</title>
        <authorList>
            <person name="Hendriks I.A."/>
            <person name="Lyon D."/>
            <person name="Young C."/>
            <person name="Jensen L.J."/>
            <person name="Vertegaal A.C."/>
            <person name="Nielsen M.L."/>
        </authorList>
    </citation>
    <scope>SUMOYLATION [LARGE SCALE ANALYSIS] AT LYS-178</scope>
    <scope>IDENTIFICATION BY MASS SPECTROMETRY [LARGE SCALE ANALYSIS]</scope>
</reference>
<feature type="chain" id="PRO_0000288067" description="Cyclic AMP-responsive element-binding protein 3-like protein 2">
    <location>
        <begin position="1"/>
        <end position="520"/>
    </location>
</feature>
<feature type="chain" id="PRO_0000296209" description="Processed cyclic AMP-responsive element-binding protein 3-like protein 2">
    <location>
        <begin position="1"/>
        <end status="unknown"/>
    </location>
</feature>
<feature type="topological domain" description="Cytoplasmic" evidence="3">
    <location>
        <begin position="1"/>
        <end position="379"/>
    </location>
</feature>
<feature type="transmembrane region" description="Helical; Signal-anchor for type II membrane protein" evidence="3">
    <location>
        <begin position="380"/>
        <end position="400"/>
    </location>
</feature>
<feature type="topological domain" description="Lumenal" evidence="3">
    <location>
        <begin position="401"/>
        <end position="520"/>
    </location>
</feature>
<feature type="domain" description="bZIP" evidence="4">
    <location>
        <begin position="294"/>
        <end position="357"/>
    </location>
</feature>
<feature type="region of interest" description="Disordered" evidence="5">
    <location>
        <begin position="195"/>
        <end position="264"/>
    </location>
</feature>
<feature type="region of interest" description="Basic motif" evidence="4">
    <location>
        <begin position="296"/>
        <end position="325"/>
    </location>
</feature>
<feature type="region of interest" description="Leucine-zipper" evidence="4">
    <location>
        <begin position="336"/>
        <end position="357"/>
    </location>
</feature>
<feature type="short sequence motif" description="S1P recognition" evidence="13">
    <location>
        <begin position="427"/>
        <end position="430"/>
    </location>
</feature>
<feature type="compositionally biased region" description="Low complexity" evidence="5">
    <location>
        <begin position="208"/>
        <end position="220"/>
    </location>
</feature>
<feature type="compositionally biased region" description="Low complexity" evidence="5">
    <location>
        <begin position="234"/>
        <end position="255"/>
    </location>
</feature>
<feature type="modified residue" description="Phosphoserine" evidence="16">
    <location>
        <position position="93"/>
    </location>
</feature>
<feature type="modified residue" description="Phosphoserine" evidence="15 16">
    <location>
        <position position="191"/>
    </location>
</feature>
<feature type="glycosylation site" description="N-linked (GlcNAc...) asparagine" evidence="3">
    <location>
        <position position="480"/>
    </location>
</feature>
<feature type="glycosylation site" description="N-linked (GlcNAc...) asparagine" evidence="3">
    <location>
        <position position="504"/>
    </location>
</feature>
<feature type="glycosylation site" description="N-linked (GlcNAc...) asparagine" evidence="3">
    <location>
        <position position="517"/>
    </location>
</feature>
<feature type="cross-link" description="Glycyl lysine isopeptide (Lys-Gly) (interchain with G-Cter in SUMO2)" evidence="17 18 19 20">
    <location>
        <position position="178"/>
    </location>
</feature>
<feature type="splice variant" id="VSP_025634" description="In isoform 3." evidence="12">
    <original>APVDHLHLPPTPPSSHGSDSEGSLSPNPRLHPFSLPQTHSPSRAAPRAPSALSS</original>
    <variation>GLSALPVSLWVMDMVSGSTEREYGERAGMSLYHRCCSWLYEIALFLKNKNFASK</variation>
    <location>
        <begin position="195"/>
        <end position="248"/>
    </location>
</feature>
<feature type="splice variant" id="VSP_025635" description="In isoform 3." evidence="12">
    <location>
        <begin position="249"/>
        <end position="520"/>
    </location>
</feature>
<feature type="splice variant" id="VSP_025636" description="In isoform 2." evidence="11">
    <original>VRSRNLLIYEEHSPPEESSSPGSAGELGGWDRGSSLLRVSGLESRPDVDLPHFIISNETSLEKSVLLELQQHLVSAKLEGNETLKVVELDRRVNTTF</original>
    <variation>GKTACGKLGRVLFYFPRAGFLSLPKGIFCESPMFKKW</variation>
    <location>
        <begin position="424"/>
        <end position="520"/>
    </location>
</feature>
<feature type="sequence variant" id="VAR_062385" evidence="6 7 8">
    <location>
        <position position="100"/>
    </location>
</feature>
<feature type="sequence variant" id="VAR_062386" description="In dbSNP:rs273957." evidence="6 7 8">
    <original>V</original>
    <variation>I</variation>
    <location>
        <position position="130"/>
    </location>
</feature>
<protein>
    <recommendedName>
        <fullName>Cyclic AMP-responsive element-binding protein 3-like protein 2</fullName>
        <shortName>cAMP-responsive element-binding protein 3-like protein 2</shortName>
    </recommendedName>
    <alternativeName>
        <fullName>BBF2 human homolog on chromosome 7</fullName>
    </alternativeName>
    <component>
        <recommendedName>
            <fullName>Processed cyclic AMP-responsive element-binding protein 3-like protein 2</fullName>
        </recommendedName>
    </component>
</protein>
<sequence length="520" mass="57415">MEVLESGEQGVLQWDRKLSELSEPGDGEALMYHTHFSELLDEFSQNVLGQLLNDPFLSEKSVSMEVEPSPTSPAPLIQAEHSYSLCEEPRAQSPFTHITTSDSFNDDEVESEKWYLSTDFPSTSIKTEPVTDEPPPGLVPSVTLTITAISTPLEKEEPPLEMNTGVDSSCQTIIPKIKLEPHEVDQFLNFSPKEAPVDHLHLPPTPPSSHGSDSEGSLSPNPRLHPFSLPQTHSPSRAAPRAPSALSSSPLLTAPHKLQGSGPLVLTEEEKRTLIAEGYPIPTKLPLSKSEEKALKKIRRKIKNKISAQESRRKKKEYMDSLEKKVESCSTENLELRKKVEVLENTNRTLLQQLQKLQTLVMGKVSRTCKLAGTQTGTCLMVVVLCFAVAFGSFFQGYGPYPSATKMALPSQHSLQEPYTASVVRSRNLLIYEEHSPPEESSSPGSAGELGGWDRGSSLLRVSGLESRPDVDLPHFIISNETSLEKSVLLELQQHLVSAKLEGNETLKVVELDRRVNTTF</sequence>